<comment type="function">
    <text evidence="1">Regulates arginine biosynthesis genes.</text>
</comment>
<comment type="pathway">
    <text>Amino-acid biosynthesis; L-arginine biosynthesis [regulation].</text>
</comment>
<comment type="subcellular location">
    <subcellularLocation>
        <location evidence="1">Cytoplasm</location>
    </subcellularLocation>
</comment>
<comment type="similarity">
    <text evidence="1">Belongs to the ArgR family.</text>
</comment>
<accession>Q0HEW1</accession>
<proteinExistence type="inferred from homology"/>
<gene>
    <name evidence="1" type="primary">argR</name>
    <name type="ordered locus">Shewmr4_3340</name>
</gene>
<protein>
    <recommendedName>
        <fullName evidence="1">Arginine repressor</fullName>
    </recommendedName>
</protein>
<dbReference type="EMBL" id="CP000446">
    <property type="protein sequence ID" value="ABI40406.1"/>
    <property type="molecule type" value="Genomic_DNA"/>
</dbReference>
<dbReference type="RefSeq" id="WP_011624073.1">
    <property type="nucleotide sequence ID" value="NC_008321.1"/>
</dbReference>
<dbReference type="SMR" id="Q0HEW1"/>
<dbReference type="GeneID" id="94729435"/>
<dbReference type="KEGG" id="she:Shewmr4_3340"/>
<dbReference type="HOGENOM" id="CLU_097103_2_0_6"/>
<dbReference type="UniPathway" id="UPA00068"/>
<dbReference type="GO" id="GO:0005737">
    <property type="term" value="C:cytoplasm"/>
    <property type="evidence" value="ECO:0007669"/>
    <property type="project" value="UniProtKB-SubCell"/>
</dbReference>
<dbReference type="GO" id="GO:0034618">
    <property type="term" value="F:arginine binding"/>
    <property type="evidence" value="ECO:0007669"/>
    <property type="project" value="InterPro"/>
</dbReference>
<dbReference type="GO" id="GO:0003677">
    <property type="term" value="F:DNA binding"/>
    <property type="evidence" value="ECO:0007669"/>
    <property type="project" value="UniProtKB-KW"/>
</dbReference>
<dbReference type="GO" id="GO:0003700">
    <property type="term" value="F:DNA-binding transcription factor activity"/>
    <property type="evidence" value="ECO:0007669"/>
    <property type="project" value="UniProtKB-UniRule"/>
</dbReference>
<dbReference type="GO" id="GO:0006526">
    <property type="term" value="P:L-arginine biosynthetic process"/>
    <property type="evidence" value="ECO:0007669"/>
    <property type="project" value="UniProtKB-UniPathway"/>
</dbReference>
<dbReference type="GO" id="GO:0051259">
    <property type="term" value="P:protein complex oligomerization"/>
    <property type="evidence" value="ECO:0007669"/>
    <property type="project" value="InterPro"/>
</dbReference>
<dbReference type="GO" id="GO:1900079">
    <property type="term" value="P:regulation of arginine biosynthetic process"/>
    <property type="evidence" value="ECO:0007669"/>
    <property type="project" value="UniProtKB-UniRule"/>
</dbReference>
<dbReference type="Gene3D" id="3.30.1360.40">
    <property type="match status" value="1"/>
</dbReference>
<dbReference type="Gene3D" id="1.10.10.10">
    <property type="entry name" value="Winged helix-like DNA-binding domain superfamily/Winged helix DNA-binding domain"/>
    <property type="match status" value="1"/>
</dbReference>
<dbReference type="HAMAP" id="MF_00173">
    <property type="entry name" value="Arg_repressor"/>
    <property type="match status" value="1"/>
</dbReference>
<dbReference type="InterPro" id="IPR001669">
    <property type="entry name" value="Arg_repress"/>
</dbReference>
<dbReference type="InterPro" id="IPR020899">
    <property type="entry name" value="Arg_repress_C"/>
</dbReference>
<dbReference type="InterPro" id="IPR036251">
    <property type="entry name" value="Arg_repress_C_sf"/>
</dbReference>
<dbReference type="InterPro" id="IPR020900">
    <property type="entry name" value="Arg_repress_DNA-bd"/>
</dbReference>
<dbReference type="InterPro" id="IPR036388">
    <property type="entry name" value="WH-like_DNA-bd_sf"/>
</dbReference>
<dbReference type="InterPro" id="IPR036390">
    <property type="entry name" value="WH_DNA-bd_sf"/>
</dbReference>
<dbReference type="NCBIfam" id="TIGR01529">
    <property type="entry name" value="argR_whole"/>
    <property type="match status" value="1"/>
</dbReference>
<dbReference type="NCBIfam" id="NF003457">
    <property type="entry name" value="PRK05066.1"/>
    <property type="match status" value="1"/>
</dbReference>
<dbReference type="PANTHER" id="PTHR34471">
    <property type="entry name" value="ARGININE REPRESSOR"/>
    <property type="match status" value="1"/>
</dbReference>
<dbReference type="PANTHER" id="PTHR34471:SF1">
    <property type="entry name" value="ARGININE REPRESSOR"/>
    <property type="match status" value="1"/>
</dbReference>
<dbReference type="Pfam" id="PF01316">
    <property type="entry name" value="Arg_repressor"/>
    <property type="match status" value="1"/>
</dbReference>
<dbReference type="Pfam" id="PF02863">
    <property type="entry name" value="Arg_repressor_C"/>
    <property type="match status" value="1"/>
</dbReference>
<dbReference type="PRINTS" id="PR01467">
    <property type="entry name" value="ARGREPRESSOR"/>
</dbReference>
<dbReference type="SUPFAM" id="SSF55252">
    <property type="entry name" value="C-terminal domain of arginine repressor"/>
    <property type="match status" value="1"/>
</dbReference>
<dbReference type="SUPFAM" id="SSF46785">
    <property type="entry name" value="Winged helix' DNA-binding domain"/>
    <property type="match status" value="1"/>
</dbReference>
<reference key="1">
    <citation type="submission" date="2006-08" db="EMBL/GenBank/DDBJ databases">
        <title>Complete sequence of Shewanella sp. MR-4.</title>
        <authorList>
            <consortium name="US DOE Joint Genome Institute"/>
            <person name="Copeland A."/>
            <person name="Lucas S."/>
            <person name="Lapidus A."/>
            <person name="Barry K."/>
            <person name="Detter J.C."/>
            <person name="Glavina del Rio T."/>
            <person name="Hammon N."/>
            <person name="Israni S."/>
            <person name="Dalin E."/>
            <person name="Tice H."/>
            <person name="Pitluck S."/>
            <person name="Kiss H."/>
            <person name="Brettin T."/>
            <person name="Bruce D."/>
            <person name="Han C."/>
            <person name="Tapia R."/>
            <person name="Gilna P."/>
            <person name="Schmutz J."/>
            <person name="Larimer F."/>
            <person name="Land M."/>
            <person name="Hauser L."/>
            <person name="Kyrpides N."/>
            <person name="Mikhailova N."/>
            <person name="Nealson K."/>
            <person name="Konstantinidis K."/>
            <person name="Klappenbach J."/>
            <person name="Tiedje J."/>
            <person name="Richardson P."/>
        </authorList>
    </citation>
    <scope>NUCLEOTIDE SEQUENCE [LARGE SCALE GENOMIC DNA]</scope>
    <source>
        <strain>MR-4</strain>
    </source>
</reference>
<keyword id="KW-0028">Amino-acid biosynthesis</keyword>
<keyword id="KW-0055">Arginine biosynthesis</keyword>
<keyword id="KW-0963">Cytoplasm</keyword>
<keyword id="KW-0238">DNA-binding</keyword>
<keyword id="KW-0678">Repressor</keyword>
<keyword id="KW-0804">Transcription</keyword>
<keyword id="KW-0805">Transcription regulation</keyword>
<sequence>MQTTKNQDDLVRIFKAILKEERFGSQSEIVAALQAEGFSNINQSKVSRMLSKFGAVRTRNAKQEMVYCLPAELGVPTAGSPLKNLVLDVDHNQAMIVVRTSPGAAQLIARLLDSIGKPEGILGTIAGDDTIFICPSSIQDIADTLETIKSLFNYAE</sequence>
<feature type="chain" id="PRO_1000023594" description="Arginine repressor">
    <location>
        <begin position="1"/>
        <end position="156"/>
    </location>
</feature>
<name>ARGR_SHESM</name>
<evidence type="ECO:0000255" key="1">
    <source>
        <dbReference type="HAMAP-Rule" id="MF_00173"/>
    </source>
</evidence>
<organism>
    <name type="scientific">Shewanella sp. (strain MR-4)</name>
    <dbReference type="NCBI Taxonomy" id="60480"/>
    <lineage>
        <taxon>Bacteria</taxon>
        <taxon>Pseudomonadati</taxon>
        <taxon>Pseudomonadota</taxon>
        <taxon>Gammaproteobacteria</taxon>
        <taxon>Alteromonadales</taxon>
        <taxon>Shewanellaceae</taxon>
        <taxon>Shewanella</taxon>
    </lineage>
</organism>